<sequence>MTEKLIFELGSPGRQGVLFPANDVPEIPPHELLPRDLIREQEVPLPEVSEGDAVRHFVRLSRMNFGVDVGFYPLGSCTMKYNPKVAEDAAGLSGFANIHPYQPDEISQGALQLMYETQQDLAEITGMDAFTLQPAAGAQGELTGMLIIKAYLESKGETGRNKVIVPDSAHGTNPATAALCGFKVVEVKSDQRGGVDLAALKQLLGPDVAALMLTNPSTLGLFEDNITEIAALVHQAGGLLYYDGANLNAIMGYARPGDMGFDVVHLNLHKTFGTPHGGGGPGSGPVGVKAELAPFLPKPVIIQREGNYLPDYHRPQSIGRVKAFFANFSVIVKAYTYLRSLGGKGLKEVSEHAVLNANYLMKQLSDHFRVPYQRTCMHEFVVSPPEDMKEQGIKTLDIAKRLLDYGYHPPTVYFPLIVEEALMFEPTETESKETLDEFAHNLIKVLAEARENPDKLRNAPYTTPIRRLDEVMAARKPLVGWFPE</sequence>
<evidence type="ECO:0000255" key="1">
    <source>
        <dbReference type="HAMAP-Rule" id="MF_00713"/>
    </source>
</evidence>
<organism>
    <name type="scientific">Desulforamulus reducens (strain ATCC BAA-1160 / DSM 100696 / MI-1)</name>
    <name type="common">Desulfotomaculum reducens</name>
    <dbReference type="NCBI Taxonomy" id="349161"/>
    <lineage>
        <taxon>Bacteria</taxon>
        <taxon>Bacillati</taxon>
        <taxon>Bacillota</taxon>
        <taxon>Clostridia</taxon>
        <taxon>Eubacteriales</taxon>
        <taxon>Peptococcaceae</taxon>
        <taxon>Desulforamulus</taxon>
    </lineage>
</organism>
<keyword id="KW-0560">Oxidoreductase</keyword>
<keyword id="KW-0663">Pyridoxal phosphate</keyword>
<keyword id="KW-1185">Reference proteome</keyword>
<proteinExistence type="inferred from homology"/>
<name>GCSPB_DESRM</name>
<reference key="1">
    <citation type="submission" date="2007-03" db="EMBL/GenBank/DDBJ databases">
        <title>Complete sequence of Desulfotomaculum reducens MI-1.</title>
        <authorList>
            <consortium name="US DOE Joint Genome Institute"/>
            <person name="Copeland A."/>
            <person name="Lucas S."/>
            <person name="Lapidus A."/>
            <person name="Barry K."/>
            <person name="Detter J.C."/>
            <person name="Glavina del Rio T."/>
            <person name="Hammon N."/>
            <person name="Israni S."/>
            <person name="Dalin E."/>
            <person name="Tice H."/>
            <person name="Pitluck S."/>
            <person name="Sims D."/>
            <person name="Brettin T."/>
            <person name="Bruce D."/>
            <person name="Han C."/>
            <person name="Tapia R."/>
            <person name="Schmutz J."/>
            <person name="Larimer F."/>
            <person name="Land M."/>
            <person name="Hauser L."/>
            <person name="Kyrpides N."/>
            <person name="Kim E."/>
            <person name="Tebo B.M."/>
            <person name="Richardson P."/>
        </authorList>
    </citation>
    <scope>NUCLEOTIDE SEQUENCE [LARGE SCALE GENOMIC DNA]</scope>
    <source>
        <strain>ATCC BAA-1160 / DSM 100696 / MI-1</strain>
    </source>
</reference>
<accession>A4J2F9</accession>
<gene>
    <name evidence="1" type="primary">gcvPB</name>
    <name type="ordered locus">Dred_0723</name>
</gene>
<protein>
    <recommendedName>
        <fullName evidence="1">Probable glycine dehydrogenase (decarboxylating) subunit 2</fullName>
        <ecNumber evidence="1">1.4.4.2</ecNumber>
    </recommendedName>
    <alternativeName>
        <fullName evidence="1">Glycine cleavage system P-protein subunit 2</fullName>
    </alternativeName>
    <alternativeName>
        <fullName evidence="1">Glycine decarboxylase subunit 2</fullName>
    </alternativeName>
    <alternativeName>
        <fullName evidence="1">Glycine dehydrogenase (aminomethyl-transferring) subunit 2</fullName>
    </alternativeName>
</protein>
<feature type="chain" id="PRO_1000072771" description="Probable glycine dehydrogenase (decarboxylating) subunit 2">
    <location>
        <begin position="1"/>
        <end position="484"/>
    </location>
</feature>
<feature type="modified residue" description="N6-(pyridoxal phosphate)lysine" evidence="1">
    <location>
        <position position="270"/>
    </location>
</feature>
<dbReference type="EC" id="1.4.4.2" evidence="1"/>
<dbReference type="EMBL" id="CP000612">
    <property type="protein sequence ID" value="ABO49262.1"/>
    <property type="molecule type" value="Genomic_DNA"/>
</dbReference>
<dbReference type="RefSeq" id="WP_011877098.1">
    <property type="nucleotide sequence ID" value="NC_009253.1"/>
</dbReference>
<dbReference type="SMR" id="A4J2F9"/>
<dbReference type="STRING" id="349161.Dred_0723"/>
<dbReference type="KEGG" id="drm:Dred_0723"/>
<dbReference type="eggNOG" id="COG1003">
    <property type="taxonomic scope" value="Bacteria"/>
</dbReference>
<dbReference type="HOGENOM" id="CLU_004620_5_0_9"/>
<dbReference type="OrthoDB" id="9801272at2"/>
<dbReference type="Proteomes" id="UP000001556">
    <property type="component" value="Chromosome"/>
</dbReference>
<dbReference type="GO" id="GO:0005829">
    <property type="term" value="C:cytosol"/>
    <property type="evidence" value="ECO:0007669"/>
    <property type="project" value="TreeGrafter"/>
</dbReference>
<dbReference type="GO" id="GO:0005960">
    <property type="term" value="C:glycine cleavage complex"/>
    <property type="evidence" value="ECO:0007669"/>
    <property type="project" value="TreeGrafter"/>
</dbReference>
<dbReference type="GO" id="GO:0016594">
    <property type="term" value="F:glycine binding"/>
    <property type="evidence" value="ECO:0007669"/>
    <property type="project" value="TreeGrafter"/>
</dbReference>
<dbReference type="GO" id="GO:0004375">
    <property type="term" value="F:glycine dehydrogenase (decarboxylating) activity"/>
    <property type="evidence" value="ECO:0007669"/>
    <property type="project" value="UniProtKB-EC"/>
</dbReference>
<dbReference type="GO" id="GO:0030170">
    <property type="term" value="F:pyridoxal phosphate binding"/>
    <property type="evidence" value="ECO:0007669"/>
    <property type="project" value="TreeGrafter"/>
</dbReference>
<dbReference type="GO" id="GO:0019464">
    <property type="term" value="P:glycine decarboxylation via glycine cleavage system"/>
    <property type="evidence" value="ECO:0007669"/>
    <property type="project" value="UniProtKB-UniRule"/>
</dbReference>
<dbReference type="CDD" id="cd00613">
    <property type="entry name" value="GDC-P"/>
    <property type="match status" value="1"/>
</dbReference>
<dbReference type="FunFam" id="3.40.640.10:FF:000034">
    <property type="entry name" value="Probable glycine dehydrogenase (decarboxylating) subunit 2"/>
    <property type="match status" value="1"/>
</dbReference>
<dbReference type="FunFam" id="3.90.1150.10:FF:000014">
    <property type="entry name" value="Probable glycine dehydrogenase (decarboxylating) subunit 2"/>
    <property type="match status" value="1"/>
</dbReference>
<dbReference type="Gene3D" id="6.20.440.10">
    <property type="match status" value="1"/>
</dbReference>
<dbReference type="Gene3D" id="3.90.1150.10">
    <property type="entry name" value="Aspartate Aminotransferase, domain 1"/>
    <property type="match status" value="1"/>
</dbReference>
<dbReference type="Gene3D" id="3.40.640.10">
    <property type="entry name" value="Type I PLP-dependent aspartate aminotransferase-like (Major domain)"/>
    <property type="match status" value="1"/>
</dbReference>
<dbReference type="HAMAP" id="MF_00713">
    <property type="entry name" value="GcvPB"/>
    <property type="match status" value="1"/>
</dbReference>
<dbReference type="InterPro" id="IPR000192">
    <property type="entry name" value="Aminotrans_V_dom"/>
</dbReference>
<dbReference type="InterPro" id="IPR023012">
    <property type="entry name" value="GcvPB"/>
</dbReference>
<dbReference type="InterPro" id="IPR049316">
    <property type="entry name" value="GDC-P_C"/>
</dbReference>
<dbReference type="InterPro" id="IPR020581">
    <property type="entry name" value="GDC_P"/>
</dbReference>
<dbReference type="InterPro" id="IPR015424">
    <property type="entry name" value="PyrdxlP-dep_Trfase"/>
</dbReference>
<dbReference type="InterPro" id="IPR015421">
    <property type="entry name" value="PyrdxlP-dep_Trfase_major"/>
</dbReference>
<dbReference type="InterPro" id="IPR015422">
    <property type="entry name" value="PyrdxlP-dep_Trfase_small"/>
</dbReference>
<dbReference type="NCBIfam" id="NF003346">
    <property type="entry name" value="PRK04366.1"/>
    <property type="match status" value="1"/>
</dbReference>
<dbReference type="PANTHER" id="PTHR11773:SF1">
    <property type="entry name" value="GLYCINE DEHYDROGENASE (DECARBOXYLATING), MITOCHONDRIAL"/>
    <property type="match status" value="1"/>
</dbReference>
<dbReference type="PANTHER" id="PTHR11773">
    <property type="entry name" value="GLYCINE DEHYDROGENASE, DECARBOXYLATING"/>
    <property type="match status" value="1"/>
</dbReference>
<dbReference type="Pfam" id="PF00266">
    <property type="entry name" value="Aminotran_5"/>
    <property type="match status" value="1"/>
</dbReference>
<dbReference type="Pfam" id="PF21478">
    <property type="entry name" value="GcvP2_C"/>
    <property type="match status" value="1"/>
</dbReference>
<dbReference type="SUPFAM" id="SSF53383">
    <property type="entry name" value="PLP-dependent transferases"/>
    <property type="match status" value="1"/>
</dbReference>
<comment type="function">
    <text evidence="1">The glycine cleavage system catalyzes the degradation of glycine. The P protein binds the alpha-amino group of glycine through its pyridoxal phosphate cofactor; CO(2) is released and the remaining methylamine moiety is then transferred to the lipoamide cofactor of the H protein.</text>
</comment>
<comment type="catalytic activity">
    <reaction evidence="1">
        <text>N(6)-[(R)-lipoyl]-L-lysyl-[glycine-cleavage complex H protein] + glycine + H(+) = N(6)-[(R)-S(8)-aminomethyldihydrolipoyl]-L-lysyl-[glycine-cleavage complex H protein] + CO2</text>
        <dbReference type="Rhea" id="RHEA:24304"/>
        <dbReference type="Rhea" id="RHEA-COMP:10494"/>
        <dbReference type="Rhea" id="RHEA-COMP:10495"/>
        <dbReference type="ChEBI" id="CHEBI:15378"/>
        <dbReference type="ChEBI" id="CHEBI:16526"/>
        <dbReference type="ChEBI" id="CHEBI:57305"/>
        <dbReference type="ChEBI" id="CHEBI:83099"/>
        <dbReference type="ChEBI" id="CHEBI:83143"/>
        <dbReference type="EC" id="1.4.4.2"/>
    </reaction>
</comment>
<comment type="cofactor">
    <cofactor evidence="1">
        <name>pyridoxal 5'-phosphate</name>
        <dbReference type="ChEBI" id="CHEBI:597326"/>
    </cofactor>
</comment>
<comment type="subunit">
    <text evidence="1">The glycine cleavage system is composed of four proteins: P, T, L and H. In this organism, the P 'protein' is a heterodimer of two subunits.</text>
</comment>
<comment type="similarity">
    <text evidence="1">Belongs to the GcvP family. C-terminal subunit subfamily.</text>
</comment>